<evidence type="ECO:0000255" key="1">
    <source>
        <dbReference type="HAMAP-Rule" id="MF_00073"/>
    </source>
</evidence>
<gene>
    <name evidence="1" type="primary">nusB</name>
    <name type="ordered locus">ECIAI1_0416</name>
</gene>
<comment type="function">
    <text evidence="1">Involved in transcription antitermination. Required for transcription of ribosomal RNA (rRNA) genes. Binds specifically to the boxA antiterminator sequence of the ribosomal RNA (rrn) operons.</text>
</comment>
<comment type="similarity">
    <text evidence="1">Belongs to the NusB family.</text>
</comment>
<accession>B7M3Q5</accession>
<protein>
    <recommendedName>
        <fullName evidence="1">Transcription antitermination protein NusB</fullName>
    </recommendedName>
    <alternativeName>
        <fullName evidence="1">Antitermination factor NusB</fullName>
    </alternativeName>
</protein>
<name>NUSB_ECO8A</name>
<organism>
    <name type="scientific">Escherichia coli O8 (strain IAI1)</name>
    <dbReference type="NCBI Taxonomy" id="585034"/>
    <lineage>
        <taxon>Bacteria</taxon>
        <taxon>Pseudomonadati</taxon>
        <taxon>Pseudomonadota</taxon>
        <taxon>Gammaproteobacteria</taxon>
        <taxon>Enterobacterales</taxon>
        <taxon>Enterobacteriaceae</taxon>
        <taxon>Escherichia</taxon>
    </lineage>
</organism>
<proteinExistence type="inferred from homology"/>
<feature type="chain" id="PRO_1000117051" description="Transcription antitermination protein NusB">
    <location>
        <begin position="1"/>
        <end position="139"/>
    </location>
</feature>
<keyword id="KW-0694">RNA-binding</keyword>
<keyword id="KW-0804">Transcription</keyword>
<keyword id="KW-0889">Transcription antitermination</keyword>
<keyword id="KW-0805">Transcription regulation</keyword>
<dbReference type="EMBL" id="CU928160">
    <property type="protein sequence ID" value="CAQ97288.1"/>
    <property type="molecule type" value="Genomic_DNA"/>
</dbReference>
<dbReference type="RefSeq" id="WP_000801125.1">
    <property type="nucleotide sequence ID" value="NC_011741.1"/>
</dbReference>
<dbReference type="SMR" id="B7M3Q5"/>
<dbReference type="GeneID" id="93777044"/>
<dbReference type="KEGG" id="ecr:ECIAI1_0416"/>
<dbReference type="HOGENOM" id="CLU_087843_4_1_6"/>
<dbReference type="GO" id="GO:0005829">
    <property type="term" value="C:cytosol"/>
    <property type="evidence" value="ECO:0007669"/>
    <property type="project" value="TreeGrafter"/>
</dbReference>
<dbReference type="GO" id="GO:0003723">
    <property type="term" value="F:RNA binding"/>
    <property type="evidence" value="ECO:0007669"/>
    <property type="project" value="UniProtKB-UniRule"/>
</dbReference>
<dbReference type="GO" id="GO:0006353">
    <property type="term" value="P:DNA-templated transcription termination"/>
    <property type="evidence" value="ECO:0007669"/>
    <property type="project" value="UniProtKB-UniRule"/>
</dbReference>
<dbReference type="GO" id="GO:0031564">
    <property type="term" value="P:transcription antitermination"/>
    <property type="evidence" value="ECO:0007669"/>
    <property type="project" value="UniProtKB-KW"/>
</dbReference>
<dbReference type="CDD" id="cd00619">
    <property type="entry name" value="Terminator_NusB"/>
    <property type="match status" value="1"/>
</dbReference>
<dbReference type="FunFam" id="1.10.940.10:FF:000001">
    <property type="entry name" value="Transcription antitermination factor NusB"/>
    <property type="match status" value="1"/>
</dbReference>
<dbReference type="Gene3D" id="1.10.940.10">
    <property type="entry name" value="NusB-like"/>
    <property type="match status" value="1"/>
</dbReference>
<dbReference type="HAMAP" id="MF_00073">
    <property type="entry name" value="NusB"/>
    <property type="match status" value="1"/>
</dbReference>
<dbReference type="InterPro" id="IPR035926">
    <property type="entry name" value="NusB-like_sf"/>
</dbReference>
<dbReference type="InterPro" id="IPR011605">
    <property type="entry name" value="NusB_fam"/>
</dbReference>
<dbReference type="InterPro" id="IPR006027">
    <property type="entry name" value="NusB_RsmB_TIM44"/>
</dbReference>
<dbReference type="NCBIfam" id="TIGR01951">
    <property type="entry name" value="nusB"/>
    <property type="match status" value="1"/>
</dbReference>
<dbReference type="PANTHER" id="PTHR11078:SF3">
    <property type="entry name" value="ANTITERMINATION NUSB DOMAIN-CONTAINING PROTEIN"/>
    <property type="match status" value="1"/>
</dbReference>
<dbReference type="PANTHER" id="PTHR11078">
    <property type="entry name" value="N UTILIZATION SUBSTANCE PROTEIN B-RELATED"/>
    <property type="match status" value="1"/>
</dbReference>
<dbReference type="Pfam" id="PF01029">
    <property type="entry name" value="NusB"/>
    <property type="match status" value="1"/>
</dbReference>
<dbReference type="SUPFAM" id="SSF48013">
    <property type="entry name" value="NusB-like"/>
    <property type="match status" value="1"/>
</dbReference>
<reference key="1">
    <citation type="journal article" date="2009" name="PLoS Genet.">
        <title>Organised genome dynamics in the Escherichia coli species results in highly diverse adaptive paths.</title>
        <authorList>
            <person name="Touchon M."/>
            <person name="Hoede C."/>
            <person name="Tenaillon O."/>
            <person name="Barbe V."/>
            <person name="Baeriswyl S."/>
            <person name="Bidet P."/>
            <person name="Bingen E."/>
            <person name="Bonacorsi S."/>
            <person name="Bouchier C."/>
            <person name="Bouvet O."/>
            <person name="Calteau A."/>
            <person name="Chiapello H."/>
            <person name="Clermont O."/>
            <person name="Cruveiller S."/>
            <person name="Danchin A."/>
            <person name="Diard M."/>
            <person name="Dossat C."/>
            <person name="Karoui M.E."/>
            <person name="Frapy E."/>
            <person name="Garry L."/>
            <person name="Ghigo J.M."/>
            <person name="Gilles A.M."/>
            <person name="Johnson J."/>
            <person name="Le Bouguenec C."/>
            <person name="Lescat M."/>
            <person name="Mangenot S."/>
            <person name="Martinez-Jehanne V."/>
            <person name="Matic I."/>
            <person name="Nassif X."/>
            <person name="Oztas S."/>
            <person name="Petit M.A."/>
            <person name="Pichon C."/>
            <person name="Rouy Z."/>
            <person name="Ruf C.S."/>
            <person name="Schneider D."/>
            <person name="Tourret J."/>
            <person name="Vacherie B."/>
            <person name="Vallenet D."/>
            <person name="Medigue C."/>
            <person name="Rocha E.P.C."/>
            <person name="Denamur E."/>
        </authorList>
    </citation>
    <scope>NUCLEOTIDE SEQUENCE [LARGE SCALE GENOMIC DNA]</scope>
    <source>
        <strain>IAI1</strain>
    </source>
</reference>
<sequence>MKPAARRRARECAVQALYSWQLSQNDIADVEYQFLAEQDVKDVDVLYFRELLAGVATNTAYLDGLMKPYLSRLLEELGQVEKAVLRIALYELSKRSDVPYKVAINEAIELAKSFGAEDSHKFVNGVLDKAAPVIRPNKK</sequence>